<sequence length="449" mass="51100">MPKEDCKYWDKCYQQNPAHLSKYNHPKKQQEHEVDGAEGKKVAPKRSASSQSGEQKKEEQTEPVNKDKSNTSASSTEMVNKDTAKGSYEAETEELHKEAMSNISGKNYMEILEKRIRLSVQKEYDNLCESNEFIRHKFLVEMPPDFYEFWKFVGSLKIDPAKPKDAGLEHLDKVFQLQLVGPFEFLAGKFHGAKLGEPGDYLRHWRFYYDPPEFQTIFVRRGTGIHYGYWRDVPQDKENLLIARNDSAKGCQFQFVAGNAFDAFLYYLEHDFAATPFSCGQLAGTKKAVAKYLSDNSLELAQLDRLQRERNKRVVAKTFHRAGIVVPFDQKTEVGYRPLAVSDSELKKMLAMLERKDVDNGAAKQAVLEKLQPVANAANIAVDESDFGSALELGIDMFCSGHKELHMLASSLLVPAYSMLSRPQFIAIAKAHMEQRSREDNLSIFDVLK</sequence>
<organism>
    <name type="scientific">Drosophila melanogaster</name>
    <name type="common">Fruit fly</name>
    <dbReference type="NCBI Taxonomy" id="7227"/>
    <lineage>
        <taxon>Eukaryota</taxon>
        <taxon>Metazoa</taxon>
        <taxon>Ecdysozoa</taxon>
        <taxon>Arthropoda</taxon>
        <taxon>Hexapoda</taxon>
        <taxon>Insecta</taxon>
        <taxon>Pterygota</taxon>
        <taxon>Neoptera</taxon>
        <taxon>Endopterygota</taxon>
        <taxon>Diptera</taxon>
        <taxon>Brachycera</taxon>
        <taxon>Muscomorpha</taxon>
        <taxon>Ephydroidea</taxon>
        <taxon>Drosophilidae</taxon>
        <taxon>Drosophila</taxon>
        <taxon>Sophophora</taxon>
    </lineage>
</organism>
<accession>Q9VNI3</accession>
<accession>Q8T050</accession>
<name>HPF1_DROME</name>
<keyword id="KW-0158">Chromosome</keyword>
<keyword id="KW-0227">DNA damage</keyword>
<keyword id="KW-0234">DNA repair</keyword>
<keyword id="KW-0479">Metal-binding</keyword>
<keyword id="KW-0539">Nucleus</keyword>
<keyword id="KW-0597">Phosphoprotein</keyword>
<keyword id="KW-1185">Reference proteome</keyword>
<keyword id="KW-0862">Zinc</keyword>
<keyword id="KW-0863">Zinc-finger</keyword>
<comment type="function">
    <text evidence="1">Cofactor for serine ADP-ribosylation that confers serine specificity on Parp. Switches the amino acid specificity of Parp from aspartate or glutamate to serine residues. Acts by completing the active site of Parp: forms a composite active site composed of residues from HPF1/CG1218 and Parp.</text>
</comment>
<comment type="subcellular location">
    <subcellularLocation>
        <location evidence="1">Chromosome</location>
    </subcellularLocation>
    <subcellularLocation>
        <location evidence="1">Nucleus</location>
    </subcellularLocation>
</comment>
<comment type="similarity">
    <text evidence="5">Belongs to the HPF1 family.</text>
</comment>
<gene>
    <name type="ORF">CG1218</name>
</gene>
<proteinExistence type="evidence at protein level"/>
<dbReference type="EMBL" id="AE014297">
    <property type="protein sequence ID" value="AAF51951.2"/>
    <property type="molecule type" value="Genomic_DNA"/>
</dbReference>
<dbReference type="EMBL" id="AY069557">
    <property type="protein sequence ID" value="AAL39702.1"/>
    <property type="molecule type" value="mRNA"/>
</dbReference>
<dbReference type="RefSeq" id="NP_649589.1">
    <property type="nucleotide sequence ID" value="NM_141332.4"/>
</dbReference>
<dbReference type="SMR" id="Q9VNI3"/>
<dbReference type="BioGRID" id="65923">
    <property type="interactions" value="24"/>
</dbReference>
<dbReference type="FunCoup" id="Q9VNI3">
    <property type="interactions" value="1316"/>
</dbReference>
<dbReference type="IntAct" id="Q9VNI3">
    <property type="interactions" value="30"/>
</dbReference>
<dbReference type="STRING" id="7227.FBpp0078279"/>
<dbReference type="iPTMnet" id="Q9VNI3"/>
<dbReference type="PaxDb" id="7227-FBpp0078279"/>
<dbReference type="DNASU" id="40718"/>
<dbReference type="EnsemblMetazoa" id="FBtr0078630">
    <property type="protein sequence ID" value="FBpp0078279"/>
    <property type="gene ID" value="FBgn0037377"/>
</dbReference>
<dbReference type="GeneID" id="40718"/>
<dbReference type="KEGG" id="dme:Dmel_CG1218"/>
<dbReference type="UCSC" id="CG1218-RA">
    <property type="organism name" value="d. melanogaster"/>
</dbReference>
<dbReference type="AGR" id="FB:FBgn0037377"/>
<dbReference type="CTD" id="54969"/>
<dbReference type="FlyBase" id="FBgn0037377">
    <property type="gene designation" value="CG1218"/>
</dbReference>
<dbReference type="VEuPathDB" id="VectorBase:FBgn0037377"/>
<dbReference type="eggNOG" id="KOG3952">
    <property type="taxonomic scope" value="Eukaryota"/>
</dbReference>
<dbReference type="GeneTree" id="ENSGT00390000014876"/>
<dbReference type="HOGENOM" id="CLU_053037_0_1_1"/>
<dbReference type="InParanoid" id="Q9VNI3"/>
<dbReference type="OMA" id="HKELHML"/>
<dbReference type="OrthoDB" id="416496at2759"/>
<dbReference type="PhylomeDB" id="Q9VNI3"/>
<dbReference type="BioGRID-ORCS" id="40718">
    <property type="hits" value="0 hits in 1 CRISPR screen"/>
</dbReference>
<dbReference type="GenomeRNAi" id="40718"/>
<dbReference type="PRO" id="PR:Q9VNI3"/>
<dbReference type="Proteomes" id="UP000000803">
    <property type="component" value="Chromosome 3R"/>
</dbReference>
<dbReference type="Bgee" id="FBgn0037377">
    <property type="expression patterns" value="Expressed in saliva-secreting gland and 73 other cell types or tissues"/>
</dbReference>
<dbReference type="GO" id="GO:0005634">
    <property type="term" value="C:nucleus"/>
    <property type="evidence" value="ECO:0000318"/>
    <property type="project" value="GO_Central"/>
</dbReference>
<dbReference type="GO" id="GO:0090734">
    <property type="term" value="C:site of DNA damage"/>
    <property type="evidence" value="ECO:0000314"/>
    <property type="project" value="FlyBase"/>
</dbReference>
<dbReference type="GO" id="GO:0042393">
    <property type="term" value="F:histone binding"/>
    <property type="evidence" value="ECO:0000318"/>
    <property type="project" value="GO_Central"/>
</dbReference>
<dbReference type="GO" id="GO:0072572">
    <property type="term" value="F:poly-ADP-D-ribose binding"/>
    <property type="evidence" value="ECO:0000314"/>
    <property type="project" value="FlyBase"/>
</dbReference>
<dbReference type="GO" id="GO:0008270">
    <property type="term" value="F:zinc ion binding"/>
    <property type="evidence" value="ECO:0000314"/>
    <property type="project" value="FlyBase"/>
</dbReference>
<dbReference type="GO" id="GO:0006974">
    <property type="term" value="P:DNA damage response"/>
    <property type="evidence" value="ECO:0000314"/>
    <property type="project" value="FlyBase"/>
</dbReference>
<dbReference type="GO" id="GO:0140861">
    <property type="term" value="P:DNA repair-dependent chromatin remodeling"/>
    <property type="evidence" value="ECO:0000318"/>
    <property type="project" value="GO_Central"/>
</dbReference>
<dbReference type="GO" id="GO:0006302">
    <property type="term" value="P:double-strand break repair"/>
    <property type="evidence" value="ECO:0000318"/>
    <property type="project" value="GO_Central"/>
</dbReference>
<dbReference type="InterPro" id="IPR019406">
    <property type="entry name" value="APLF_PBZ"/>
</dbReference>
<dbReference type="InterPro" id="IPR019361">
    <property type="entry name" value="HPF1"/>
</dbReference>
<dbReference type="PANTHER" id="PTHR13386">
    <property type="entry name" value="HISTONE PARYLATION FACTOR 1"/>
    <property type="match status" value="1"/>
</dbReference>
<dbReference type="PANTHER" id="PTHR13386:SF1">
    <property type="entry name" value="HISTONE PARYLATION FACTOR 1"/>
    <property type="match status" value="1"/>
</dbReference>
<dbReference type="Pfam" id="PF10228">
    <property type="entry name" value="HPF1"/>
    <property type="match status" value="1"/>
</dbReference>
<dbReference type="Pfam" id="PF10283">
    <property type="entry name" value="zf-CCHH"/>
    <property type="match status" value="1"/>
</dbReference>
<evidence type="ECO:0000250" key="1">
    <source>
        <dbReference type="UniProtKB" id="Q9NWY4"/>
    </source>
</evidence>
<evidence type="ECO:0000255" key="2"/>
<evidence type="ECO:0000256" key="3">
    <source>
        <dbReference type="SAM" id="MobiDB-lite"/>
    </source>
</evidence>
<evidence type="ECO:0000269" key="4">
    <source>
    </source>
</evidence>
<evidence type="ECO:0000305" key="5"/>
<protein>
    <recommendedName>
        <fullName evidence="5">Histone PARylation factor 1-like</fullName>
    </recommendedName>
</protein>
<reference key="1">
    <citation type="journal article" date="2000" name="Science">
        <title>The genome sequence of Drosophila melanogaster.</title>
        <authorList>
            <person name="Adams M.D."/>
            <person name="Celniker S.E."/>
            <person name="Holt R.A."/>
            <person name="Evans C.A."/>
            <person name="Gocayne J.D."/>
            <person name="Amanatides P.G."/>
            <person name="Scherer S.E."/>
            <person name="Li P.W."/>
            <person name="Hoskins R.A."/>
            <person name="Galle R.F."/>
            <person name="George R.A."/>
            <person name="Lewis S.E."/>
            <person name="Richards S."/>
            <person name="Ashburner M."/>
            <person name="Henderson S.N."/>
            <person name="Sutton G.G."/>
            <person name="Wortman J.R."/>
            <person name="Yandell M.D."/>
            <person name="Zhang Q."/>
            <person name="Chen L.X."/>
            <person name="Brandon R.C."/>
            <person name="Rogers Y.-H.C."/>
            <person name="Blazej R.G."/>
            <person name="Champe M."/>
            <person name="Pfeiffer B.D."/>
            <person name="Wan K.H."/>
            <person name="Doyle C."/>
            <person name="Baxter E.G."/>
            <person name="Helt G."/>
            <person name="Nelson C.R."/>
            <person name="Miklos G.L.G."/>
            <person name="Abril J.F."/>
            <person name="Agbayani A."/>
            <person name="An H.-J."/>
            <person name="Andrews-Pfannkoch C."/>
            <person name="Baldwin D."/>
            <person name="Ballew R.M."/>
            <person name="Basu A."/>
            <person name="Baxendale J."/>
            <person name="Bayraktaroglu L."/>
            <person name="Beasley E.M."/>
            <person name="Beeson K.Y."/>
            <person name="Benos P.V."/>
            <person name="Berman B.P."/>
            <person name="Bhandari D."/>
            <person name="Bolshakov S."/>
            <person name="Borkova D."/>
            <person name="Botchan M.R."/>
            <person name="Bouck J."/>
            <person name="Brokstein P."/>
            <person name="Brottier P."/>
            <person name="Burtis K.C."/>
            <person name="Busam D.A."/>
            <person name="Butler H."/>
            <person name="Cadieu E."/>
            <person name="Center A."/>
            <person name="Chandra I."/>
            <person name="Cherry J.M."/>
            <person name="Cawley S."/>
            <person name="Dahlke C."/>
            <person name="Davenport L.B."/>
            <person name="Davies P."/>
            <person name="de Pablos B."/>
            <person name="Delcher A."/>
            <person name="Deng Z."/>
            <person name="Mays A.D."/>
            <person name="Dew I."/>
            <person name="Dietz S.M."/>
            <person name="Dodson K."/>
            <person name="Doup L.E."/>
            <person name="Downes M."/>
            <person name="Dugan-Rocha S."/>
            <person name="Dunkov B.C."/>
            <person name="Dunn P."/>
            <person name="Durbin K.J."/>
            <person name="Evangelista C.C."/>
            <person name="Ferraz C."/>
            <person name="Ferriera S."/>
            <person name="Fleischmann W."/>
            <person name="Fosler C."/>
            <person name="Gabrielian A.E."/>
            <person name="Garg N.S."/>
            <person name="Gelbart W.M."/>
            <person name="Glasser K."/>
            <person name="Glodek A."/>
            <person name="Gong F."/>
            <person name="Gorrell J.H."/>
            <person name="Gu Z."/>
            <person name="Guan P."/>
            <person name="Harris M."/>
            <person name="Harris N.L."/>
            <person name="Harvey D.A."/>
            <person name="Heiman T.J."/>
            <person name="Hernandez J.R."/>
            <person name="Houck J."/>
            <person name="Hostin D."/>
            <person name="Houston K.A."/>
            <person name="Howland T.J."/>
            <person name="Wei M.-H."/>
            <person name="Ibegwam C."/>
            <person name="Jalali M."/>
            <person name="Kalush F."/>
            <person name="Karpen G.H."/>
            <person name="Ke Z."/>
            <person name="Kennison J.A."/>
            <person name="Ketchum K.A."/>
            <person name="Kimmel B.E."/>
            <person name="Kodira C.D."/>
            <person name="Kraft C.L."/>
            <person name="Kravitz S."/>
            <person name="Kulp D."/>
            <person name="Lai Z."/>
            <person name="Lasko P."/>
            <person name="Lei Y."/>
            <person name="Levitsky A.A."/>
            <person name="Li J.H."/>
            <person name="Li Z."/>
            <person name="Liang Y."/>
            <person name="Lin X."/>
            <person name="Liu X."/>
            <person name="Mattei B."/>
            <person name="McIntosh T.C."/>
            <person name="McLeod M.P."/>
            <person name="McPherson D."/>
            <person name="Merkulov G."/>
            <person name="Milshina N.V."/>
            <person name="Mobarry C."/>
            <person name="Morris J."/>
            <person name="Moshrefi A."/>
            <person name="Mount S.M."/>
            <person name="Moy M."/>
            <person name="Murphy B."/>
            <person name="Murphy L."/>
            <person name="Muzny D.M."/>
            <person name="Nelson D.L."/>
            <person name="Nelson D.R."/>
            <person name="Nelson K.A."/>
            <person name="Nixon K."/>
            <person name="Nusskern D.R."/>
            <person name="Pacleb J.M."/>
            <person name="Palazzolo M."/>
            <person name="Pittman G.S."/>
            <person name="Pan S."/>
            <person name="Pollard J."/>
            <person name="Puri V."/>
            <person name="Reese M.G."/>
            <person name="Reinert K."/>
            <person name="Remington K."/>
            <person name="Saunders R.D.C."/>
            <person name="Scheeler F."/>
            <person name="Shen H."/>
            <person name="Shue B.C."/>
            <person name="Siden-Kiamos I."/>
            <person name="Simpson M."/>
            <person name="Skupski M.P."/>
            <person name="Smith T.J."/>
            <person name="Spier E."/>
            <person name="Spradling A.C."/>
            <person name="Stapleton M."/>
            <person name="Strong R."/>
            <person name="Sun E."/>
            <person name="Svirskas R."/>
            <person name="Tector C."/>
            <person name="Turner R."/>
            <person name="Venter E."/>
            <person name="Wang A.H."/>
            <person name="Wang X."/>
            <person name="Wang Z.-Y."/>
            <person name="Wassarman D.A."/>
            <person name="Weinstock G.M."/>
            <person name="Weissenbach J."/>
            <person name="Williams S.M."/>
            <person name="Woodage T."/>
            <person name="Worley K.C."/>
            <person name="Wu D."/>
            <person name="Yang S."/>
            <person name="Yao Q.A."/>
            <person name="Ye J."/>
            <person name="Yeh R.-F."/>
            <person name="Zaveri J.S."/>
            <person name="Zhan M."/>
            <person name="Zhang G."/>
            <person name="Zhao Q."/>
            <person name="Zheng L."/>
            <person name="Zheng X.H."/>
            <person name="Zhong F.N."/>
            <person name="Zhong W."/>
            <person name="Zhou X."/>
            <person name="Zhu S.C."/>
            <person name="Zhu X."/>
            <person name="Smith H.O."/>
            <person name="Gibbs R.A."/>
            <person name="Myers E.W."/>
            <person name="Rubin G.M."/>
            <person name="Venter J.C."/>
        </authorList>
    </citation>
    <scope>NUCLEOTIDE SEQUENCE [LARGE SCALE GENOMIC DNA]</scope>
    <source>
        <strain>Berkeley</strain>
    </source>
</reference>
<reference key="2">
    <citation type="journal article" date="2002" name="Genome Biol.">
        <title>Annotation of the Drosophila melanogaster euchromatic genome: a systematic review.</title>
        <authorList>
            <person name="Misra S."/>
            <person name="Crosby M.A."/>
            <person name="Mungall C.J."/>
            <person name="Matthews B.B."/>
            <person name="Campbell K.S."/>
            <person name="Hradecky P."/>
            <person name="Huang Y."/>
            <person name="Kaminker J.S."/>
            <person name="Millburn G.H."/>
            <person name="Prochnik S.E."/>
            <person name="Smith C.D."/>
            <person name="Tupy J.L."/>
            <person name="Whitfield E.J."/>
            <person name="Bayraktaroglu L."/>
            <person name="Berman B.P."/>
            <person name="Bettencourt B.R."/>
            <person name="Celniker S.E."/>
            <person name="de Grey A.D.N.J."/>
            <person name="Drysdale R.A."/>
            <person name="Harris N.L."/>
            <person name="Richter J."/>
            <person name="Russo S."/>
            <person name="Schroeder A.J."/>
            <person name="Shu S.Q."/>
            <person name="Stapleton M."/>
            <person name="Yamada C."/>
            <person name="Ashburner M."/>
            <person name="Gelbart W.M."/>
            <person name="Rubin G.M."/>
            <person name="Lewis S.E."/>
        </authorList>
    </citation>
    <scope>GENOME REANNOTATION</scope>
    <source>
        <strain>Berkeley</strain>
    </source>
</reference>
<reference key="3">
    <citation type="journal article" date="2002" name="Genome Biol.">
        <title>A Drosophila full-length cDNA resource.</title>
        <authorList>
            <person name="Stapleton M."/>
            <person name="Carlson J.W."/>
            <person name="Brokstein P."/>
            <person name="Yu C."/>
            <person name="Champe M."/>
            <person name="George R.A."/>
            <person name="Guarin H."/>
            <person name="Kronmiller B."/>
            <person name="Pacleb J.M."/>
            <person name="Park S."/>
            <person name="Wan K.H."/>
            <person name="Rubin G.M."/>
            <person name="Celniker S.E."/>
        </authorList>
    </citation>
    <scope>NUCLEOTIDE SEQUENCE [LARGE SCALE MRNA]</scope>
    <source>
        <strain>Berkeley</strain>
        <tissue>Embryo</tissue>
    </source>
</reference>
<reference key="4">
    <citation type="journal article" date="2008" name="J. Proteome Res.">
        <title>Phosphoproteome analysis of Drosophila melanogaster embryos.</title>
        <authorList>
            <person name="Zhai B."/>
            <person name="Villen J."/>
            <person name="Beausoleil S.A."/>
            <person name="Mintseris J."/>
            <person name="Gygi S.P."/>
        </authorList>
    </citation>
    <scope>PHOSPHORYLATION [LARGE SCALE ANALYSIS] AT SER-72</scope>
    <scope>IDENTIFICATION BY MASS SPECTROMETRY</scope>
    <source>
        <tissue>Embryo</tissue>
    </source>
</reference>
<reference key="5">
    <citation type="journal article" date="2010" name="Genes Cells">
        <title>Solution structure of a zinc-finger domain that binds to poly-ADP-ribose.</title>
        <authorList>
            <person name="Isogai S."/>
            <person name="Kanno S."/>
            <person name="Ariyoshi M."/>
            <person name="Tochio H."/>
            <person name="Ito Y."/>
            <person name="Yasui A."/>
            <person name="Shirakawa M."/>
        </authorList>
    </citation>
    <scope>STRUCTURE BY NMR</scope>
</reference>
<feature type="chain" id="PRO_0000342627" description="Histone PARylation factor 1-like">
    <location>
        <begin position="1"/>
        <end position="449"/>
    </location>
</feature>
<feature type="zinc finger region" description="CCHC-type" evidence="2">
    <location>
        <begin position="3"/>
        <end position="28"/>
    </location>
</feature>
<feature type="region of interest" description="Disordered" evidence="3">
    <location>
        <begin position="18"/>
        <end position="93"/>
    </location>
</feature>
<feature type="compositionally biased region" description="Basic and acidic residues" evidence="3">
    <location>
        <begin position="28"/>
        <end position="41"/>
    </location>
</feature>
<feature type="compositionally biased region" description="Basic and acidic residues" evidence="3">
    <location>
        <begin position="54"/>
        <end position="69"/>
    </location>
</feature>
<feature type="active site" description="Proton donor" evidence="1">
    <location>
        <position position="384"/>
    </location>
</feature>
<feature type="modified residue" description="Phosphoserine" evidence="4">
    <location>
        <position position="72"/>
    </location>
</feature>